<dbReference type="EC" id="6.3.5.2" evidence="1"/>
<dbReference type="EMBL" id="AM421808">
    <property type="protein sequence ID" value="CAM09614.1"/>
    <property type="molecule type" value="Genomic_DNA"/>
</dbReference>
<dbReference type="RefSeq" id="WP_002248138.1">
    <property type="nucleotide sequence ID" value="NC_008767.1"/>
</dbReference>
<dbReference type="SMR" id="A1KRY5"/>
<dbReference type="MEROPS" id="C26.957"/>
<dbReference type="KEGG" id="nmc:NMC0303"/>
<dbReference type="HOGENOM" id="CLU_014340_0_5_4"/>
<dbReference type="UniPathway" id="UPA00189">
    <property type="reaction ID" value="UER00296"/>
</dbReference>
<dbReference type="Proteomes" id="UP000002286">
    <property type="component" value="Chromosome"/>
</dbReference>
<dbReference type="GO" id="GO:0005829">
    <property type="term" value="C:cytosol"/>
    <property type="evidence" value="ECO:0007669"/>
    <property type="project" value="TreeGrafter"/>
</dbReference>
<dbReference type="GO" id="GO:0005524">
    <property type="term" value="F:ATP binding"/>
    <property type="evidence" value="ECO:0007669"/>
    <property type="project" value="UniProtKB-UniRule"/>
</dbReference>
<dbReference type="GO" id="GO:0003921">
    <property type="term" value="F:GMP synthase activity"/>
    <property type="evidence" value="ECO:0007669"/>
    <property type="project" value="InterPro"/>
</dbReference>
<dbReference type="CDD" id="cd01742">
    <property type="entry name" value="GATase1_GMP_Synthase"/>
    <property type="match status" value="1"/>
</dbReference>
<dbReference type="CDD" id="cd01997">
    <property type="entry name" value="GMP_synthase_C"/>
    <property type="match status" value="1"/>
</dbReference>
<dbReference type="FunFam" id="3.30.300.10:FF:000002">
    <property type="entry name" value="GMP synthase [glutamine-hydrolyzing]"/>
    <property type="match status" value="1"/>
</dbReference>
<dbReference type="FunFam" id="3.40.50.620:FF:000001">
    <property type="entry name" value="GMP synthase [glutamine-hydrolyzing]"/>
    <property type="match status" value="1"/>
</dbReference>
<dbReference type="FunFam" id="3.40.50.880:FF:000001">
    <property type="entry name" value="GMP synthase [glutamine-hydrolyzing]"/>
    <property type="match status" value="1"/>
</dbReference>
<dbReference type="Gene3D" id="3.30.300.10">
    <property type="match status" value="1"/>
</dbReference>
<dbReference type="Gene3D" id="3.40.50.880">
    <property type="match status" value="1"/>
</dbReference>
<dbReference type="Gene3D" id="3.40.50.620">
    <property type="entry name" value="HUPs"/>
    <property type="match status" value="1"/>
</dbReference>
<dbReference type="HAMAP" id="MF_00344">
    <property type="entry name" value="GMP_synthase"/>
    <property type="match status" value="1"/>
</dbReference>
<dbReference type="InterPro" id="IPR029062">
    <property type="entry name" value="Class_I_gatase-like"/>
</dbReference>
<dbReference type="InterPro" id="IPR017926">
    <property type="entry name" value="GATASE"/>
</dbReference>
<dbReference type="InterPro" id="IPR001674">
    <property type="entry name" value="GMP_synth_C"/>
</dbReference>
<dbReference type="InterPro" id="IPR004739">
    <property type="entry name" value="GMP_synth_GATase"/>
</dbReference>
<dbReference type="InterPro" id="IPR022955">
    <property type="entry name" value="GMP_synthase"/>
</dbReference>
<dbReference type="InterPro" id="IPR025777">
    <property type="entry name" value="GMPS_ATP_PPase_dom"/>
</dbReference>
<dbReference type="InterPro" id="IPR022310">
    <property type="entry name" value="NAD/GMP_synthase"/>
</dbReference>
<dbReference type="InterPro" id="IPR014729">
    <property type="entry name" value="Rossmann-like_a/b/a_fold"/>
</dbReference>
<dbReference type="NCBIfam" id="TIGR00884">
    <property type="entry name" value="guaA_Cterm"/>
    <property type="match status" value="1"/>
</dbReference>
<dbReference type="NCBIfam" id="TIGR00888">
    <property type="entry name" value="guaA_Nterm"/>
    <property type="match status" value="1"/>
</dbReference>
<dbReference type="NCBIfam" id="NF000848">
    <property type="entry name" value="PRK00074.1"/>
    <property type="match status" value="1"/>
</dbReference>
<dbReference type="PANTHER" id="PTHR11922:SF2">
    <property type="entry name" value="GMP SYNTHASE [GLUTAMINE-HYDROLYZING]"/>
    <property type="match status" value="1"/>
</dbReference>
<dbReference type="PANTHER" id="PTHR11922">
    <property type="entry name" value="GMP SYNTHASE-RELATED"/>
    <property type="match status" value="1"/>
</dbReference>
<dbReference type="Pfam" id="PF00117">
    <property type="entry name" value="GATase"/>
    <property type="match status" value="1"/>
</dbReference>
<dbReference type="Pfam" id="PF00958">
    <property type="entry name" value="GMP_synt_C"/>
    <property type="match status" value="1"/>
</dbReference>
<dbReference type="Pfam" id="PF02540">
    <property type="entry name" value="NAD_synthase"/>
    <property type="match status" value="1"/>
</dbReference>
<dbReference type="PRINTS" id="PR00097">
    <property type="entry name" value="ANTSNTHASEII"/>
</dbReference>
<dbReference type="PRINTS" id="PR00096">
    <property type="entry name" value="GATASE"/>
</dbReference>
<dbReference type="SUPFAM" id="SSF52402">
    <property type="entry name" value="Adenine nucleotide alpha hydrolases-like"/>
    <property type="match status" value="1"/>
</dbReference>
<dbReference type="SUPFAM" id="SSF52317">
    <property type="entry name" value="Class I glutamine amidotransferase-like"/>
    <property type="match status" value="1"/>
</dbReference>
<dbReference type="SUPFAM" id="SSF54810">
    <property type="entry name" value="GMP synthetase C-terminal dimerisation domain"/>
    <property type="match status" value="1"/>
</dbReference>
<dbReference type="PROSITE" id="PS51273">
    <property type="entry name" value="GATASE_TYPE_1"/>
    <property type="match status" value="1"/>
</dbReference>
<dbReference type="PROSITE" id="PS51553">
    <property type="entry name" value="GMPS_ATP_PPASE"/>
    <property type="match status" value="1"/>
</dbReference>
<protein>
    <recommendedName>
        <fullName evidence="1">GMP synthase [glutamine-hydrolyzing]</fullName>
        <ecNumber evidence="1">6.3.5.2</ecNumber>
    </recommendedName>
    <alternativeName>
        <fullName evidence="1">GMP synthetase</fullName>
    </alternativeName>
    <alternativeName>
        <fullName evidence="1">Glutamine amidotransferase</fullName>
    </alternativeName>
</protein>
<comment type="function">
    <text evidence="1">Catalyzes the synthesis of GMP from XMP.</text>
</comment>
<comment type="catalytic activity">
    <reaction evidence="1">
        <text>XMP + L-glutamine + ATP + H2O = GMP + L-glutamate + AMP + diphosphate + 2 H(+)</text>
        <dbReference type="Rhea" id="RHEA:11680"/>
        <dbReference type="ChEBI" id="CHEBI:15377"/>
        <dbReference type="ChEBI" id="CHEBI:15378"/>
        <dbReference type="ChEBI" id="CHEBI:29985"/>
        <dbReference type="ChEBI" id="CHEBI:30616"/>
        <dbReference type="ChEBI" id="CHEBI:33019"/>
        <dbReference type="ChEBI" id="CHEBI:57464"/>
        <dbReference type="ChEBI" id="CHEBI:58115"/>
        <dbReference type="ChEBI" id="CHEBI:58359"/>
        <dbReference type="ChEBI" id="CHEBI:456215"/>
        <dbReference type="EC" id="6.3.5.2"/>
    </reaction>
</comment>
<comment type="pathway">
    <text evidence="1">Purine metabolism; GMP biosynthesis; GMP from XMP (L-Gln route): step 1/1.</text>
</comment>
<comment type="subunit">
    <text evidence="1">Homodimer.</text>
</comment>
<proteinExistence type="inferred from homology"/>
<keyword id="KW-0067">ATP-binding</keyword>
<keyword id="KW-0315">Glutamine amidotransferase</keyword>
<keyword id="KW-0332">GMP biosynthesis</keyword>
<keyword id="KW-0436">Ligase</keyword>
<keyword id="KW-0547">Nucleotide-binding</keyword>
<keyword id="KW-0658">Purine biosynthesis</keyword>
<reference key="1">
    <citation type="journal article" date="2007" name="PLoS Genet.">
        <title>Meningococcal genetic variation mechanisms viewed through comparative analysis of serogroup C strain FAM18.</title>
        <authorList>
            <person name="Bentley S.D."/>
            <person name="Vernikos G.S."/>
            <person name="Snyder L.A.S."/>
            <person name="Churcher C."/>
            <person name="Arrowsmith C."/>
            <person name="Chillingworth T."/>
            <person name="Cronin A."/>
            <person name="Davis P.H."/>
            <person name="Holroyd N.E."/>
            <person name="Jagels K."/>
            <person name="Maddison M."/>
            <person name="Moule S."/>
            <person name="Rabbinowitsch E."/>
            <person name="Sharp S."/>
            <person name="Unwin L."/>
            <person name="Whitehead S."/>
            <person name="Quail M.A."/>
            <person name="Achtman M."/>
            <person name="Barrell B.G."/>
            <person name="Saunders N.J."/>
            <person name="Parkhill J."/>
        </authorList>
    </citation>
    <scope>NUCLEOTIDE SEQUENCE [LARGE SCALE GENOMIC DNA]</scope>
    <source>
        <strain>ATCC 700532 / DSM 15464 / FAM18</strain>
    </source>
</reference>
<name>GUAA_NEIMF</name>
<organism>
    <name type="scientific">Neisseria meningitidis serogroup C / serotype 2a (strain ATCC 700532 / DSM 15464 / FAM18)</name>
    <dbReference type="NCBI Taxonomy" id="272831"/>
    <lineage>
        <taxon>Bacteria</taxon>
        <taxon>Pseudomonadati</taxon>
        <taxon>Pseudomonadota</taxon>
        <taxon>Betaproteobacteria</taxon>
        <taxon>Neisseriales</taxon>
        <taxon>Neisseriaceae</taxon>
        <taxon>Neisseria</taxon>
    </lineage>
</organism>
<evidence type="ECO:0000255" key="1">
    <source>
        <dbReference type="HAMAP-Rule" id="MF_00344"/>
    </source>
</evidence>
<gene>
    <name evidence="1" type="primary">guaA</name>
    <name type="ordered locus">NMC0303</name>
</gene>
<sequence length="521" mass="57818">MTQDKILILDFGSQVTQLIARRVREAHVYCELHSFDMPLDEIKAFNPKGIILSGGPNSVYESDYQADTGIFDLGIPILGICYGMQFMAHHLGGEVQPGNQREFGYAQVKTIDSELTRGIQDDTPNTLDVWMSHGDKVSKLPTGFTVIGDTPSCPIAMMENAEKQFYGIQFHPEVTHTKQGRALLNRFVLDICGAQPSWTMPNYIEEAVAKIREQVGSDEVILGLSGGVDSSVAAALIHRAIGDQLTCVFVDHGLLRLNEGKMVMDMFARNLGVKVIHVDAEGQFMEKLAGVTDPEKKRKIIGAEFIEVFDAEEKKLTNAKWLAQGTIYPDVIESAGAKTKKAHAIKSHHNVGGLPENMKLKLLEPLRDLFKDEVRELGVALGLPREMVYRHPFPGPGLGVRILGEVKKEYADLLRQADDIFIQELRNTTDENGTSWYDLTSQAFAVFLPVKSVGVMGDGRTYDYVVALRAVITSDFMTAHWAELPYSLLGRVSNRIINEVKGINRVVYDVSGKPPATIEWE</sequence>
<feature type="chain" id="PRO_1000120343" description="GMP synthase [glutamine-hydrolyzing]">
    <location>
        <begin position="1"/>
        <end position="521"/>
    </location>
</feature>
<feature type="domain" description="Glutamine amidotransferase type-1" evidence="1">
    <location>
        <begin position="5"/>
        <end position="197"/>
    </location>
</feature>
<feature type="domain" description="GMPS ATP-PPase" evidence="1">
    <location>
        <begin position="198"/>
        <end position="390"/>
    </location>
</feature>
<feature type="active site" description="Nucleophile" evidence="1">
    <location>
        <position position="81"/>
    </location>
</feature>
<feature type="active site" evidence="1">
    <location>
        <position position="171"/>
    </location>
</feature>
<feature type="active site" evidence="1">
    <location>
        <position position="173"/>
    </location>
</feature>
<feature type="binding site" evidence="1">
    <location>
        <begin position="225"/>
        <end position="231"/>
    </location>
    <ligand>
        <name>ATP</name>
        <dbReference type="ChEBI" id="CHEBI:30616"/>
    </ligand>
</feature>
<accession>A1KRY5</accession>